<evidence type="ECO:0000255" key="1">
    <source>
        <dbReference type="HAMAP-Rule" id="MF_01307"/>
    </source>
</evidence>
<evidence type="ECO:0000305" key="2"/>
<organism>
    <name type="scientific">Psychrobacter cryohalolentis (strain ATCC BAA-1226 / DSM 17306 / VKM B-2378 / K5)</name>
    <dbReference type="NCBI Taxonomy" id="335284"/>
    <lineage>
        <taxon>Bacteria</taxon>
        <taxon>Pseudomonadati</taxon>
        <taxon>Pseudomonadota</taxon>
        <taxon>Gammaproteobacteria</taxon>
        <taxon>Moraxellales</taxon>
        <taxon>Moraxellaceae</taxon>
        <taxon>Psychrobacter</taxon>
    </lineage>
</organism>
<dbReference type="EMBL" id="CP000323">
    <property type="protein sequence ID" value="ABE74284.1"/>
    <property type="molecule type" value="Genomic_DNA"/>
</dbReference>
<dbReference type="RefSeq" id="WP_010196711.1">
    <property type="nucleotide sequence ID" value="NC_007969.1"/>
</dbReference>
<dbReference type="SMR" id="Q1QDG9"/>
<dbReference type="STRING" id="335284.Pcryo_0501"/>
<dbReference type="GeneID" id="60255470"/>
<dbReference type="KEGG" id="pcr:Pcryo_0501"/>
<dbReference type="eggNOG" id="COG0098">
    <property type="taxonomic scope" value="Bacteria"/>
</dbReference>
<dbReference type="HOGENOM" id="CLU_065898_2_2_6"/>
<dbReference type="Proteomes" id="UP000002425">
    <property type="component" value="Chromosome"/>
</dbReference>
<dbReference type="GO" id="GO:0015935">
    <property type="term" value="C:small ribosomal subunit"/>
    <property type="evidence" value="ECO:0007669"/>
    <property type="project" value="InterPro"/>
</dbReference>
<dbReference type="GO" id="GO:0019843">
    <property type="term" value="F:rRNA binding"/>
    <property type="evidence" value="ECO:0007669"/>
    <property type="project" value="UniProtKB-UniRule"/>
</dbReference>
<dbReference type="GO" id="GO:0003735">
    <property type="term" value="F:structural constituent of ribosome"/>
    <property type="evidence" value="ECO:0007669"/>
    <property type="project" value="InterPro"/>
</dbReference>
<dbReference type="GO" id="GO:0006412">
    <property type="term" value="P:translation"/>
    <property type="evidence" value="ECO:0007669"/>
    <property type="project" value="UniProtKB-UniRule"/>
</dbReference>
<dbReference type="FunFam" id="3.30.160.20:FF:000001">
    <property type="entry name" value="30S ribosomal protein S5"/>
    <property type="match status" value="1"/>
</dbReference>
<dbReference type="FunFam" id="3.30.230.10:FF:000002">
    <property type="entry name" value="30S ribosomal protein S5"/>
    <property type="match status" value="1"/>
</dbReference>
<dbReference type="Gene3D" id="3.30.160.20">
    <property type="match status" value="1"/>
</dbReference>
<dbReference type="Gene3D" id="3.30.230.10">
    <property type="match status" value="1"/>
</dbReference>
<dbReference type="HAMAP" id="MF_01307_B">
    <property type="entry name" value="Ribosomal_uS5_B"/>
    <property type="match status" value="1"/>
</dbReference>
<dbReference type="InterPro" id="IPR020568">
    <property type="entry name" value="Ribosomal_Su5_D2-typ_SF"/>
</dbReference>
<dbReference type="InterPro" id="IPR000851">
    <property type="entry name" value="Ribosomal_uS5"/>
</dbReference>
<dbReference type="InterPro" id="IPR005712">
    <property type="entry name" value="Ribosomal_uS5_bac-type"/>
</dbReference>
<dbReference type="InterPro" id="IPR005324">
    <property type="entry name" value="Ribosomal_uS5_C"/>
</dbReference>
<dbReference type="InterPro" id="IPR013810">
    <property type="entry name" value="Ribosomal_uS5_N"/>
</dbReference>
<dbReference type="InterPro" id="IPR018192">
    <property type="entry name" value="Ribosomal_uS5_N_CS"/>
</dbReference>
<dbReference type="InterPro" id="IPR014721">
    <property type="entry name" value="Ribsml_uS5_D2-typ_fold_subgr"/>
</dbReference>
<dbReference type="NCBIfam" id="TIGR01021">
    <property type="entry name" value="rpsE_bact"/>
    <property type="match status" value="1"/>
</dbReference>
<dbReference type="PANTHER" id="PTHR48277">
    <property type="entry name" value="MITOCHONDRIAL RIBOSOMAL PROTEIN S5"/>
    <property type="match status" value="1"/>
</dbReference>
<dbReference type="PANTHER" id="PTHR48277:SF1">
    <property type="entry name" value="MITOCHONDRIAL RIBOSOMAL PROTEIN S5"/>
    <property type="match status" value="1"/>
</dbReference>
<dbReference type="Pfam" id="PF00333">
    <property type="entry name" value="Ribosomal_S5"/>
    <property type="match status" value="1"/>
</dbReference>
<dbReference type="Pfam" id="PF03719">
    <property type="entry name" value="Ribosomal_S5_C"/>
    <property type="match status" value="1"/>
</dbReference>
<dbReference type="SUPFAM" id="SSF54768">
    <property type="entry name" value="dsRNA-binding domain-like"/>
    <property type="match status" value="1"/>
</dbReference>
<dbReference type="SUPFAM" id="SSF54211">
    <property type="entry name" value="Ribosomal protein S5 domain 2-like"/>
    <property type="match status" value="1"/>
</dbReference>
<dbReference type="PROSITE" id="PS00585">
    <property type="entry name" value="RIBOSOMAL_S5"/>
    <property type="match status" value="1"/>
</dbReference>
<dbReference type="PROSITE" id="PS50881">
    <property type="entry name" value="S5_DSRBD"/>
    <property type="match status" value="1"/>
</dbReference>
<feature type="chain" id="PRO_1000086042" description="Small ribosomal subunit protein uS5">
    <location>
        <begin position="1"/>
        <end position="171"/>
    </location>
</feature>
<feature type="domain" description="S5 DRBM" evidence="1">
    <location>
        <begin position="16"/>
        <end position="79"/>
    </location>
</feature>
<comment type="function">
    <text evidence="1">With S4 and S12 plays an important role in translational accuracy.</text>
</comment>
<comment type="function">
    <text evidence="1">Located at the back of the 30S subunit body where it stabilizes the conformation of the head with respect to the body.</text>
</comment>
<comment type="subunit">
    <text evidence="1">Part of the 30S ribosomal subunit. Contacts proteins S4 and S8.</text>
</comment>
<comment type="domain">
    <text>The N-terminal domain interacts with the head of the 30S subunit; the C-terminal domain interacts with the body and contacts protein S4. The interaction surface between S4 and S5 is involved in control of translational fidelity.</text>
</comment>
<comment type="similarity">
    <text evidence="1">Belongs to the universal ribosomal protein uS5 family.</text>
</comment>
<sequence length="171" mass="18189">MARNDKNDKNEQTDGLVERLVTVDRVAKVVKGGRIFSFTALTVVGDGNGRVGFGRGKAREVPAAIQKALEAAKRNMITVELNDATLYHPIKARHGASKVYMQPASEGTGVIAGGAMRAVLEVAGVKDVLTKCYGSTNTANVVRATFNGLRDMSTPEKMAAKRGKSVDEILG</sequence>
<name>RS5_PSYCK</name>
<proteinExistence type="inferred from homology"/>
<gene>
    <name evidence="1" type="primary">rpsE</name>
    <name type="ordered locus">Pcryo_0501</name>
</gene>
<protein>
    <recommendedName>
        <fullName evidence="1">Small ribosomal subunit protein uS5</fullName>
    </recommendedName>
    <alternativeName>
        <fullName evidence="2">30S ribosomal protein S5</fullName>
    </alternativeName>
</protein>
<accession>Q1QDG9</accession>
<reference key="1">
    <citation type="submission" date="2006-03" db="EMBL/GenBank/DDBJ databases">
        <title>Complete sequence of chromosome of Psychrobacter cryohalolentis K5.</title>
        <authorList>
            <consortium name="US DOE Joint Genome Institute"/>
            <person name="Copeland A."/>
            <person name="Lucas S."/>
            <person name="Lapidus A."/>
            <person name="Barry K."/>
            <person name="Detter J.C."/>
            <person name="Glavina T."/>
            <person name="Hammon N."/>
            <person name="Israni S."/>
            <person name="Dalin E."/>
            <person name="Tice H."/>
            <person name="Pitluck S."/>
            <person name="Brettin T."/>
            <person name="Bruce D."/>
            <person name="Han C."/>
            <person name="Tapia R."/>
            <person name="Sims D.R."/>
            <person name="Gilna P."/>
            <person name="Schmutz J."/>
            <person name="Larimer F."/>
            <person name="Land M."/>
            <person name="Hauser L."/>
            <person name="Kyrpides N."/>
            <person name="Kim E."/>
            <person name="Richardson P."/>
        </authorList>
    </citation>
    <scope>NUCLEOTIDE SEQUENCE [LARGE SCALE GENOMIC DNA]</scope>
    <source>
        <strain>ATCC BAA-1226 / DSM 17306 / VKM B-2378 / K5</strain>
    </source>
</reference>
<keyword id="KW-0687">Ribonucleoprotein</keyword>
<keyword id="KW-0689">Ribosomal protein</keyword>
<keyword id="KW-0694">RNA-binding</keyword>
<keyword id="KW-0699">rRNA-binding</keyword>